<organism>
    <name type="scientific">Dictyostelium discoideum</name>
    <name type="common">Social amoeba</name>
    <dbReference type="NCBI Taxonomy" id="44689"/>
    <lineage>
        <taxon>Eukaryota</taxon>
        <taxon>Amoebozoa</taxon>
        <taxon>Evosea</taxon>
        <taxon>Eumycetozoa</taxon>
        <taxon>Dictyostelia</taxon>
        <taxon>Dictyosteliales</taxon>
        <taxon>Dictyosteliaceae</taxon>
        <taxon>Dictyostelium</taxon>
    </lineage>
</organism>
<sequence>MGCFNSKEAGAGRPKTTTQQQQQATPEPTVTTAEVRADEKISMDQDISQGNVEDFYVVGKELGRGAFSVVREGTRKTTSDKVALKYIEKKFVKKKHIEQLRREIDIMKKVKHENVLSLKEIFESDSHLTLVMELVTGGELFYKIVERGSFTEKGARNVVRQVCAGVEYLHSQGIAHRDLKPENLLCNGEGEDMTIKIADFGLSKIFGTGEALETSCGTPDYVAPEVLTGGSYDNAVDMWSIGVITYILLCGFPPFYASSQNLLFEKILTADYDFPEPEWTHVSEHAKAFIRNLIVKDPDQRHTAKQCLDDLWLSGSDQSIGSAADLHSHFAEKMKKYNDQRRGGQSSNN</sequence>
<proteinExistence type="inferred from homology"/>
<accession>Q869W6</accession>
<accession>Q554D5</accession>
<protein>
    <recommendedName>
        <fullName>Probable myosin light chain kinase DDB_G0275057</fullName>
        <ecNumber>2.7.11.18</ecNumber>
    </recommendedName>
</protein>
<gene>
    <name type="ORF">DDB_G0275057</name>
</gene>
<keyword id="KW-0067">ATP-binding</keyword>
<keyword id="KW-0418">Kinase</keyword>
<keyword id="KW-0547">Nucleotide-binding</keyword>
<keyword id="KW-1185">Reference proteome</keyword>
<keyword id="KW-0723">Serine/threonine-protein kinase</keyword>
<keyword id="KW-0808">Transferase</keyword>
<evidence type="ECO:0000255" key="1">
    <source>
        <dbReference type="PROSITE-ProRule" id="PRU00159"/>
    </source>
</evidence>
<evidence type="ECO:0000255" key="2">
    <source>
        <dbReference type="PROSITE-ProRule" id="PRU10027"/>
    </source>
</evidence>
<evidence type="ECO:0000256" key="3">
    <source>
        <dbReference type="SAM" id="MobiDB-lite"/>
    </source>
</evidence>
<evidence type="ECO:0000305" key="4"/>
<name>MYLKG_DICDI</name>
<reference key="1">
    <citation type="journal article" date="2002" name="Nature">
        <title>Sequence and analysis of chromosome 2 of Dictyostelium discoideum.</title>
        <authorList>
            <person name="Gloeckner G."/>
            <person name="Eichinger L."/>
            <person name="Szafranski K."/>
            <person name="Pachebat J.A."/>
            <person name="Bankier A.T."/>
            <person name="Dear P.H."/>
            <person name="Lehmann R."/>
            <person name="Baumgart C."/>
            <person name="Parra G."/>
            <person name="Abril J.F."/>
            <person name="Guigo R."/>
            <person name="Kumpf K."/>
            <person name="Tunggal B."/>
            <person name="Cox E.C."/>
            <person name="Quail M.A."/>
            <person name="Platzer M."/>
            <person name="Rosenthal A."/>
            <person name="Noegel A.A."/>
        </authorList>
    </citation>
    <scope>NUCLEOTIDE SEQUENCE [LARGE SCALE GENOMIC DNA]</scope>
    <source>
        <strain>AX4</strain>
    </source>
</reference>
<reference key="2">
    <citation type="journal article" date="2005" name="Nature">
        <title>The genome of the social amoeba Dictyostelium discoideum.</title>
        <authorList>
            <person name="Eichinger L."/>
            <person name="Pachebat J.A."/>
            <person name="Gloeckner G."/>
            <person name="Rajandream M.A."/>
            <person name="Sucgang R."/>
            <person name="Berriman M."/>
            <person name="Song J."/>
            <person name="Olsen R."/>
            <person name="Szafranski K."/>
            <person name="Xu Q."/>
            <person name="Tunggal B."/>
            <person name="Kummerfeld S."/>
            <person name="Madera M."/>
            <person name="Konfortov B.A."/>
            <person name="Rivero F."/>
            <person name="Bankier A.T."/>
            <person name="Lehmann R."/>
            <person name="Hamlin N."/>
            <person name="Davies R."/>
            <person name="Gaudet P."/>
            <person name="Fey P."/>
            <person name="Pilcher K."/>
            <person name="Chen G."/>
            <person name="Saunders D."/>
            <person name="Sodergren E.J."/>
            <person name="Davis P."/>
            <person name="Kerhornou A."/>
            <person name="Nie X."/>
            <person name="Hall N."/>
            <person name="Anjard C."/>
            <person name="Hemphill L."/>
            <person name="Bason N."/>
            <person name="Farbrother P."/>
            <person name="Desany B."/>
            <person name="Just E."/>
            <person name="Morio T."/>
            <person name="Rost R."/>
            <person name="Churcher C.M."/>
            <person name="Cooper J."/>
            <person name="Haydock S."/>
            <person name="van Driessche N."/>
            <person name="Cronin A."/>
            <person name="Goodhead I."/>
            <person name="Muzny D.M."/>
            <person name="Mourier T."/>
            <person name="Pain A."/>
            <person name="Lu M."/>
            <person name="Harper D."/>
            <person name="Lindsay R."/>
            <person name="Hauser H."/>
            <person name="James K.D."/>
            <person name="Quiles M."/>
            <person name="Madan Babu M."/>
            <person name="Saito T."/>
            <person name="Buchrieser C."/>
            <person name="Wardroper A."/>
            <person name="Felder M."/>
            <person name="Thangavelu M."/>
            <person name="Johnson D."/>
            <person name="Knights A."/>
            <person name="Loulseged H."/>
            <person name="Mungall K.L."/>
            <person name="Oliver K."/>
            <person name="Price C."/>
            <person name="Quail M.A."/>
            <person name="Urushihara H."/>
            <person name="Hernandez J."/>
            <person name="Rabbinowitsch E."/>
            <person name="Steffen D."/>
            <person name="Sanders M."/>
            <person name="Ma J."/>
            <person name="Kohara Y."/>
            <person name="Sharp S."/>
            <person name="Simmonds M.N."/>
            <person name="Spiegler S."/>
            <person name="Tivey A."/>
            <person name="Sugano S."/>
            <person name="White B."/>
            <person name="Walker D."/>
            <person name="Woodward J.R."/>
            <person name="Winckler T."/>
            <person name="Tanaka Y."/>
            <person name="Shaulsky G."/>
            <person name="Schleicher M."/>
            <person name="Weinstock G.M."/>
            <person name="Rosenthal A."/>
            <person name="Cox E.C."/>
            <person name="Chisholm R.L."/>
            <person name="Gibbs R.A."/>
            <person name="Loomis W.F."/>
            <person name="Platzer M."/>
            <person name="Kay R.R."/>
            <person name="Williams J.G."/>
            <person name="Dear P.H."/>
            <person name="Noegel A.A."/>
            <person name="Barrell B.G."/>
            <person name="Kuspa A."/>
        </authorList>
    </citation>
    <scope>NUCLEOTIDE SEQUENCE [LARGE SCALE GENOMIC DNA]</scope>
    <source>
        <strain>AX4</strain>
    </source>
</reference>
<dbReference type="EC" id="2.7.11.18"/>
<dbReference type="EMBL" id="AAFI02000013">
    <property type="protein sequence ID" value="EAL69809.1"/>
    <property type="molecule type" value="Genomic_DNA"/>
</dbReference>
<dbReference type="RefSeq" id="XP_643776.1">
    <property type="nucleotide sequence ID" value="XM_638684.1"/>
</dbReference>
<dbReference type="SMR" id="Q869W6"/>
<dbReference type="FunCoup" id="Q869W6">
    <property type="interactions" value="5"/>
</dbReference>
<dbReference type="STRING" id="44689.Q869W6"/>
<dbReference type="PaxDb" id="44689-DDB0216307"/>
<dbReference type="EnsemblProtists" id="EAL69809">
    <property type="protein sequence ID" value="EAL69809"/>
    <property type="gene ID" value="DDB_G0275057"/>
</dbReference>
<dbReference type="GeneID" id="8619821"/>
<dbReference type="KEGG" id="ddi:DDB_G0275057"/>
<dbReference type="dictyBase" id="DDB_G0275057"/>
<dbReference type="VEuPathDB" id="AmoebaDB:DDB_G0275057"/>
<dbReference type="eggNOG" id="KOG0032">
    <property type="taxonomic scope" value="Eukaryota"/>
</dbReference>
<dbReference type="HOGENOM" id="CLU_000288_63_0_1"/>
<dbReference type="InParanoid" id="Q869W6"/>
<dbReference type="OMA" id="PMKRYTC"/>
<dbReference type="PhylomeDB" id="Q869W6"/>
<dbReference type="PRO" id="PR:Q869W6"/>
<dbReference type="Proteomes" id="UP000002195">
    <property type="component" value="Chromosome 2"/>
</dbReference>
<dbReference type="GO" id="GO:0005737">
    <property type="term" value="C:cytoplasm"/>
    <property type="evidence" value="ECO:0000318"/>
    <property type="project" value="GO_Central"/>
</dbReference>
<dbReference type="GO" id="GO:0005524">
    <property type="term" value="F:ATP binding"/>
    <property type="evidence" value="ECO:0007669"/>
    <property type="project" value="UniProtKB-KW"/>
</dbReference>
<dbReference type="GO" id="GO:0004687">
    <property type="term" value="F:myosin light chain kinase activity"/>
    <property type="evidence" value="ECO:0007669"/>
    <property type="project" value="UniProtKB-EC"/>
</dbReference>
<dbReference type="GO" id="GO:0004674">
    <property type="term" value="F:protein serine/threonine kinase activity"/>
    <property type="evidence" value="ECO:0000250"/>
    <property type="project" value="dictyBase"/>
</dbReference>
<dbReference type="GO" id="GO:0007165">
    <property type="term" value="P:signal transduction"/>
    <property type="evidence" value="ECO:0000318"/>
    <property type="project" value="GO_Central"/>
</dbReference>
<dbReference type="CDD" id="cd05117">
    <property type="entry name" value="STKc_CAMK"/>
    <property type="match status" value="1"/>
</dbReference>
<dbReference type="FunFam" id="1.10.510.10:FF:001435">
    <property type="entry name" value="Probable myosin light chain kinase DDB_G0275057"/>
    <property type="match status" value="1"/>
</dbReference>
<dbReference type="FunFam" id="3.30.200.20:FF:001250">
    <property type="entry name" value="Probable myosin light chain kinase DDB_G0275057"/>
    <property type="match status" value="1"/>
</dbReference>
<dbReference type="Gene3D" id="3.30.200.20">
    <property type="entry name" value="Phosphorylase Kinase, domain 1"/>
    <property type="match status" value="1"/>
</dbReference>
<dbReference type="Gene3D" id="1.10.510.10">
    <property type="entry name" value="Transferase(Phosphotransferase) domain 1"/>
    <property type="match status" value="1"/>
</dbReference>
<dbReference type="InterPro" id="IPR011009">
    <property type="entry name" value="Kinase-like_dom_sf"/>
</dbReference>
<dbReference type="InterPro" id="IPR000719">
    <property type="entry name" value="Prot_kinase_dom"/>
</dbReference>
<dbReference type="InterPro" id="IPR017441">
    <property type="entry name" value="Protein_kinase_ATP_BS"/>
</dbReference>
<dbReference type="InterPro" id="IPR008271">
    <property type="entry name" value="Ser/Thr_kinase_AS"/>
</dbReference>
<dbReference type="PANTHER" id="PTHR24347">
    <property type="entry name" value="SERINE/THREONINE-PROTEIN KINASE"/>
    <property type="match status" value="1"/>
</dbReference>
<dbReference type="Pfam" id="PF00069">
    <property type="entry name" value="Pkinase"/>
    <property type="match status" value="1"/>
</dbReference>
<dbReference type="SMART" id="SM00220">
    <property type="entry name" value="S_TKc"/>
    <property type="match status" value="1"/>
</dbReference>
<dbReference type="SUPFAM" id="SSF56112">
    <property type="entry name" value="Protein kinase-like (PK-like)"/>
    <property type="match status" value="1"/>
</dbReference>
<dbReference type="PROSITE" id="PS00107">
    <property type="entry name" value="PROTEIN_KINASE_ATP"/>
    <property type="match status" value="1"/>
</dbReference>
<dbReference type="PROSITE" id="PS50011">
    <property type="entry name" value="PROTEIN_KINASE_DOM"/>
    <property type="match status" value="1"/>
</dbReference>
<dbReference type="PROSITE" id="PS00108">
    <property type="entry name" value="PROTEIN_KINASE_ST"/>
    <property type="match status" value="1"/>
</dbReference>
<comment type="function">
    <text>May phosphorylate a specific serine in the N-terminus of a myosin light chain.</text>
</comment>
<comment type="catalytic activity">
    <reaction>
        <text>L-seryl-[myosin light chain] + ATP = O-phospho-L-seryl-[myosin light chain] + ADP + H(+)</text>
        <dbReference type="Rhea" id="RHEA:22004"/>
        <dbReference type="Rhea" id="RHEA-COMP:13684"/>
        <dbReference type="Rhea" id="RHEA-COMP:13685"/>
        <dbReference type="ChEBI" id="CHEBI:15378"/>
        <dbReference type="ChEBI" id="CHEBI:29999"/>
        <dbReference type="ChEBI" id="CHEBI:30616"/>
        <dbReference type="ChEBI" id="CHEBI:83421"/>
        <dbReference type="ChEBI" id="CHEBI:456216"/>
        <dbReference type="EC" id="2.7.11.18"/>
    </reaction>
</comment>
<comment type="catalytic activity">
    <reaction>
        <text>L-threonyl-[myosin light chain] + ATP = O-phospho-L-threonyl-[myosin light chain] + ADP + H(+)</text>
        <dbReference type="Rhea" id="RHEA:53900"/>
        <dbReference type="Rhea" id="RHEA-COMP:13686"/>
        <dbReference type="Rhea" id="RHEA-COMP:13687"/>
        <dbReference type="ChEBI" id="CHEBI:15378"/>
        <dbReference type="ChEBI" id="CHEBI:30013"/>
        <dbReference type="ChEBI" id="CHEBI:30616"/>
        <dbReference type="ChEBI" id="CHEBI:61977"/>
        <dbReference type="ChEBI" id="CHEBI:456216"/>
        <dbReference type="EC" id="2.7.11.18"/>
    </reaction>
</comment>
<comment type="activity regulation">
    <text>Does not have a calmodulin-binding domain.</text>
</comment>
<comment type="similarity">
    <text evidence="4">Belongs to the protein kinase superfamily. CAMK Ser/Thr protein kinase family. CaMK subfamily.</text>
</comment>
<feature type="chain" id="PRO_0000355203" description="Probable myosin light chain kinase DDB_G0275057">
    <location>
        <begin position="1"/>
        <end position="349"/>
    </location>
</feature>
<feature type="domain" description="Protein kinase" evidence="1">
    <location>
        <begin position="56"/>
        <end position="313"/>
    </location>
</feature>
<feature type="region of interest" description="Disordered" evidence="3">
    <location>
        <begin position="1"/>
        <end position="33"/>
    </location>
</feature>
<feature type="compositionally biased region" description="Low complexity" evidence="3">
    <location>
        <begin position="16"/>
        <end position="33"/>
    </location>
</feature>
<feature type="active site" description="Proton acceptor" evidence="1 2">
    <location>
        <position position="178"/>
    </location>
</feature>
<feature type="binding site" evidence="1">
    <location>
        <begin position="62"/>
        <end position="70"/>
    </location>
    <ligand>
        <name>ATP</name>
        <dbReference type="ChEBI" id="CHEBI:30616"/>
    </ligand>
</feature>
<feature type="binding site" evidence="1">
    <location>
        <position position="85"/>
    </location>
    <ligand>
        <name>ATP</name>
        <dbReference type="ChEBI" id="CHEBI:30616"/>
    </ligand>
</feature>